<sequence>MKIAVTGKGGVGKSTIVGMLARALSDEGWRVMAIDADPDANLASAIGVPAERLSALLPISKMTGLARERTGASETTGTHFILNPRVDDIPEQFCVDHAGIKLLLMGTVNHAGSGCVCPEHALVRTLLRHILTKRKECVLIDMEAGIEHFGRGTIEAVDLLVIVIEPGSRSLQTAAQIEGLARDLGIKTICHIANKLASPVDVGFILDRADQFDLLGSIPFDSAIQAADQAGLSCYDLSPACRDKAHALMAALLERVGPTQGVS</sequence>
<gene>
    <name type="primary">cooC</name>
</gene>
<accession>P31897</accession>
<dbReference type="EMBL" id="U65510">
    <property type="protein sequence ID" value="AAC45124.1"/>
    <property type="molecule type" value="Genomic_DNA"/>
</dbReference>
<dbReference type="PIR" id="D42957">
    <property type="entry name" value="D42957"/>
</dbReference>
<dbReference type="PIR" id="T51322">
    <property type="entry name" value="T51322"/>
</dbReference>
<dbReference type="RefSeq" id="WP_011389182.1">
    <property type="nucleotide sequence ID" value="NZ_DAMDTZ010000025.1"/>
</dbReference>
<dbReference type="SMR" id="P31897"/>
<dbReference type="OMA" id="GCVCPAS"/>
<dbReference type="BioCyc" id="MetaCyc:MONOMER-16461"/>
<dbReference type="GO" id="GO:0009898">
    <property type="term" value="C:cytoplasmic side of plasma membrane"/>
    <property type="evidence" value="ECO:0007669"/>
    <property type="project" value="TreeGrafter"/>
</dbReference>
<dbReference type="GO" id="GO:0005829">
    <property type="term" value="C:cytosol"/>
    <property type="evidence" value="ECO:0007669"/>
    <property type="project" value="TreeGrafter"/>
</dbReference>
<dbReference type="GO" id="GO:0016020">
    <property type="term" value="C:membrane"/>
    <property type="evidence" value="ECO:0000314"/>
    <property type="project" value="CACAO"/>
</dbReference>
<dbReference type="GO" id="GO:0005524">
    <property type="term" value="F:ATP binding"/>
    <property type="evidence" value="ECO:0007669"/>
    <property type="project" value="UniProtKB-KW"/>
</dbReference>
<dbReference type="GO" id="GO:0016887">
    <property type="term" value="F:ATP hydrolysis activity"/>
    <property type="evidence" value="ECO:0007669"/>
    <property type="project" value="TreeGrafter"/>
</dbReference>
<dbReference type="GO" id="GO:0003924">
    <property type="term" value="F:GTPase activity"/>
    <property type="evidence" value="ECO:0000314"/>
    <property type="project" value="CACAO"/>
</dbReference>
<dbReference type="GO" id="GO:0051782">
    <property type="term" value="P:negative regulation of cell division"/>
    <property type="evidence" value="ECO:0007669"/>
    <property type="project" value="TreeGrafter"/>
</dbReference>
<dbReference type="GO" id="GO:0018414">
    <property type="term" value="P:nickel incorporation into metallo-sulfur cluster"/>
    <property type="evidence" value="ECO:0000315"/>
    <property type="project" value="CACAO"/>
</dbReference>
<dbReference type="CDD" id="cd02034">
    <property type="entry name" value="CooC1"/>
    <property type="match status" value="1"/>
</dbReference>
<dbReference type="FunFam" id="3.40.50.300:FF:001573">
    <property type="entry name" value="Carbon monoxide dehydrogenase accessory protein CooC"/>
    <property type="match status" value="1"/>
</dbReference>
<dbReference type="Gene3D" id="3.40.50.300">
    <property type="entry name" value="P-loop containing nucleotide triphosphate hydrolases"/>
    <property type="match status" value="1"/>
</dbReference>
<dbReference type="InterPro" id="IPR002586">
    <property type="entry name" value="CobQ/CobB/MinD/ParA_Nub-bd_dom"/>
</dbReference>
<dbReference type="InterPro" id="IPR014433">
    <property type="entry name" value="CooC"/>
</dbReference>
<dbReference type="InterPro" id="IPR027417">
    <property type="entry name" value="P-loop_NTPase"/>
</dbReference>
<dbReference type="InterPro" id="IPR050625">
    <property type="entry name" value="ParA/MinD_ATPase"/>
</dbReference>
<dbReference type="PANTHER" id="PTHR43384:SF6">
    <property type="entry name" value="SEPTUM SITE-DETERMINING PROTEIN MIND HOMOLOG, CHLOROPLASTIC"/>
    <property type="match status" value="1"/>
</dbReference>
<dbReference type="PANTHER" id="PTHR43384">
    <property type="entry name" value="SEPTUM SITE-DETERMINING PROTEIN MIND HOMOLOG, CHLOROPLASTIC-RELATED"/>
    <property type="match status" value="1"/>
</dbReference>
<dbReference type="Pfam" id="PF01656">
    <property type="entry name" value="CbiA"/>
    <property type="match status" value="1"/>
</dbReference>
<dbReference type="PIRSF" id="PIRSF005647">
    <property type="entry name" value="CooC"/>
    <property type="match status" value="1"/>
</dbReference>
<dbReference type="SUPFAM" id="SSF52540">
    <property type="entry name" value="P-loop containing nucleoside triphosphate hydrolases"/>
    <property type="match status" value="1"/>
</dbReference>
<name>COOC_RHORU</name>
<evidence type="ECO:0000255" key="1"/>
<reference key="1">
    <citation type="journal article" date="1997" name="J. Bacteriol.">
        <title>In vivo nickel insertion into the carbon monoxide dehydrogenase of Rhodospirillum rubrum: molecular and physiological characterization of cooCTJ.</title>
        <authorList>
            <person name="Kerby R.L."/>
            <person name="Ludden P.W."/>
            <person name="Roberts G.P."/>
        </authorList>
    </citation>
    <scope>NUCLEOTIDE SEQUENCE [GENOMIC DNA]</scope>
    <source>
        <strain>UR1</strain>
    </source>
</reference>
<reference key="2">
    <citation type="journal article" date="1992" name="J. Bacteriol.">
        <title>Genetic and physiological characterization of the Rhodospirillum rubrum carbon monoxide dehydrogenase system.</title>
        <authorList>
            <person name="Kerby R.L."/>
            <person name="Hong S.S."/>
            <person name="Ensign S.A."/>
            <person name="Coppoc L.J."/>
            <person name="Ludden P.W."/>
            <person name="Roberts G.P."/>
        </authorList>
    </citation>
    <scope>NUCLEOTIDE SEQUENCE [GENOMIC DNA] OF 1-35</scope>
    <source>
        <strain>UR1</strain>
    </source>
</reference>
<feature type="chain" id="PRO_0000090022" description="Carbon monoxide dehydrogenase accessory protein CooC">
    <location>
        <begin position="1"/>
        <end position="263"/>
    </location>
</feature>
<feature type="binding site" evidence="1">
    <location>
        <begin position="7"/>
        <end position="14"/>
    </location>
    <ligand>
        <name>ATP</name>
        <dbReference type="ChEBI" id="CHEBI:30616"/>
    </ligand>
</feature>
<organism>
    <name type="scientific">Rhodospirillum rubrum</name>
    <dbReference type="NCBI Taxonomy" id="1085"/>
    <lineage>
        <taxon>Bacteria</taxon>
        <taxon>Pseudomonadati</taxon>
        <taxon>Pseudomonadota</taxon>
        <taxon>Alphaproteobacteria</taxon>
        <taxon>Rhodospirillales</taxon>
        <taxon>Rhodospirillaceae</taxon>
        <taxon>Rhodospirillum</taxon>
    </lineage>
</organism>
<keyword id="KW-0067">ATP-binding</keyword>
<keyword id="KW-0533">Nickel</keyword>
<keyword id="KW-0547">Nucleotide-binding</keyword>
<comment type="function">
    <text>Involved in the insertion of nickel into the carbon monoxide dehydrogenase (CODH).</text>
</comment>
<protein>
    <recommendedName>
        <fullName>Carbon monoxide dehydrogenase accessory protein CooC</fullName>
    </recommendedName>
</protein>
<proteinExistence type="predicted"/>